<reference key="1">
    <citation type="submission" date="2007-10" db="EMBL/GenBank/DDBJ databases">
        <title>Complete genome of Alkaliphilus oremlandii OhILAs.</title>
        <authorList>
            <person name="Copeland A."/>
            <person name="Lucas S."/>
            <person name="Lapidus A."/>
            <person name="Barry K."/>
            <person name="Detter J.C."/>
            <person name="Glavina del Rio T."/>
            <person name="Hammon N."/>
            <person name="Israni S."/>
            <person name="Dalin E."/>
            <person name="Tice H."/>
            <person name="Pitluck S."/>
            <person name="Chain P."/>
            <person name="Malfatti S."/>
            <person name="Shin M."/>
            <person name="Vergez L."/>
            <person name="Schmutz J."/>
            <person name="Larimer F."/>
            <person name="Land M."/>
            <person name="Hauser L."/>
            <person name="Kyrpides N."/>
            <person name="Mikhailova N."/>
            <person name="Stolz J.F."/>
            <person name="Dawson A."/>
            <person name="Fisher E."/>
            <person name="Crable B."/>
            <person name="Perera E."/>
            <person name="Lisak J."/>
            <person name="Ranganathan M."/>
            <person name="Basu P."/>
            <person name="Richardson P."/>
        </authorList>
    </citation>
    <scope>NUCLEOTIDE SEQUENCE [LARGE SCALE GENOMIC DNA]</scope>
    <source>
        <strain>OhILAs</strain>
    </source>
</reference>
<protein>
    <recommendedName>
        <fullName evidence="1">Gamma-glutamyl phosphate reductase</fullName>
        <shortName evidence="1">GPR</shortName>
        <ecNumber evidence="1">1.2.1.41</ecNumber>
    </recommendedName>
    <alternativeName>
        <fullName evidence="1">Glutamate-5-semialdehyde dehydrogenase</fullName>
    </alternativeName>
    <alternativeName>
        <fullName evidence="1">Glutamyl-gamma-semialdehyde dehydrogenase</fullName>
        <shortName evidence="1">GSA dehydrogenase</shortName>
    </alternativeName>
</protein>
<keyword id="KW-0028">Amino-acid biosynthesis</keyword>
<keyword id="KW-0963">Cytoplasm</keyword>
<keyword id="KW-0521">NADP</keyword>
<keyword id="KW-0560">Oxidoreductase</keyword>
<keyword id="KW-0641">Proline biosynthesis</keyword>
<keyword id="KW-1185">Reference proteome</keyword>
<organism>
    <name type="scientific">Alkaliphilus oremlandii (strain OhILAs)</name>
    <name type="common">Clostridium oremlandii (strain OhILAs)</name>
    <dbReference type="NCBI Taxonomy" id="350688"/>
    <lineage>
        <taxon>Bacteria</taxon>
        <taxon>Bacillati</taxon>
        <taxon>Bacillota</taxon>
        <taxon>Clostridia</taxon>
        <taxon>Peptostreptococcales</taxon>
        <taxon>Natronincolaceae</taxon>
        <taxon>Alkaliphilus</taxon>
    </lineage>
</organism>
<evidence type="ECO:0000255" key="1">
    <source>
        <dbReference type="HAMAP-Rule" id="MF_00412"/>
    </source>
</evidence>
<sequence length="413" mass="45572">MSYLIEQCKRLKEASYALGMISTKDKDEALRLIIDSIKRNKDDILAENDKDVLAAKEKGTKDSLIDRLKLTEDRIQGILEGIETIIGLKDPIWRSNDVWTLENGLTISKMTVPLGVIGIIYESRPNVTVDAFSLALKSGNCILLRGSSSAIHSNKMIVSAIKEGLRRSKVSEDIIELIEDTDRNVVKEMLTLNEYIDVIIPRGGADLIRFVVDHATVPTIETGIGNCHIYVDESANLENAIQIITNAKIQRPGVCNACETTLIHEDIAPKFLPMLAAALKDKVELKGCPRTREIIQAAEATDMDWAEEYLDYILAVKVVSNVDEAIGHIQAYGTKHSEAIITENYTNANYFLRRVDAAAVYVNASTRFTDGGAFGFGGEMGISTQKTHARGPMGLNELVTMKYTVVGNGQIRQ</sequence>
<dbReference type="EC" id="1.2.1.41" evidence="1"/>
<dbReference type="EMBL" id="CP000853">
    <property type="protein sequence ID" value="ABW17694.1"/>
    <property type="molecule type" value="Genomic_DNA"/>
</dbReference>
<dbReference type="RefSeq" id="WP_012158009.1">
    <property type="nucleotide sequence ID" value="NC_009922.1"/>
</dbReference>
<dbReference type="SMR" id="A8MFQ5"/>
<dbReference type="STRING" id="350688.Clos_0127"/>
<dbReference type="KEGG" id="aoe:Clos_0127"/>
<dbReference type="eggNOG" id="COG0014">
    <property type="taxonomic scope" value="Bacteria"/>
</dbReference>
<dbReference type="HOGENOM" id="CLU_030231_0_0_9"/>
<dbReference type="OrthoDB" id="9809970at2"/>
<dbReference type="UniPathway" id="UPA00098">
    <property type="reaction ID" value="UER00360"/>
</dbReference>
<dbReference type="Proteomes" id="UP000000269">
    <property type="component" value="Chromosome"/>
</dbReference>
<dbReference type="GO" id="GO:0005737">
    <property type="term" value="C:cytoplasm"/>
    <property type="evidence" value="ECO:0007669"/>
    <property type="project" value="UniProtKB-SubCell"/>
</dbReference>
<dbReference type="GO" id="GO:0004350">
    <property type="term" value="F:glutamate-5-semialdehyde dehydrogenase activity"/>
    <property type="evidence" value="ECO:0007669"/>
    <property type="project" value="UniProtKB-UniRule"/>
</dbReference>
<dbReference type="GO" id="GO:0050661">
    <property type="term" value="F:NADP binding"/>
    <property type="evidence" value="ECO:0007669"/>
    <property type="project" value="InterPro"/>
</dbReference>
<dbReference type="GO" id="GO:0055129">
    <property type="term" value="P:L-proline biosynthetic process"/>
    <property type="evidence" value="ECO:0007669"/>
    <property type="project" value="UniProtKB-UniRule"/>
</dbReference>
<dbReference type="CDD" id="cd07079">
    <property type="entry name" value="ALDH_F18-19_ProA-GPR"/>
    <property type="match status" value="1"/>
</dbReference>
<dbReference type="FunFam" id="3.40.309.10:FF:000006">
    <property type="entry name" value="Gamma-glutamyl phosphate reductase"/>
    <property type="match status" value="1"/>
</dbReference>
<dbReference type="Gene3D" id="3.40.605.10">
    <property type="entry name" value="Aldehyde Dehydrogenase, Chain A, domain 1"/>
    <property type="match status" value="1"/>
</dbReference>
<dbReference type="Gene3D" id="3.40.309.10">
    <property type="entry name" value="Aldehyde Dehydrogenase, Chain A, domain 2"/>
    <property type="match status" value="1"/>
</dbReference>
<dbReference type="HAMAP" id="MF_00412">
    <property type="entry name" value="ProA"/>
    <property type="match status" value="1"/>
</dbReference>
<dbReference type="InterPro" id="IPR016161">
    <property type="entry name" value="Ald_DH/histidinol_DH"/>
</dbReference>
<dbReference type="InterPro" id="IPR016163">
    <property type="entry name" value="Ald_DH_C"/>
</dbReference>
<dbReference type="InterPro" id="IPR016162">
    <property type="entry name" value="Ald_DH_N"/>
</dbReference>
<dbReference type="InterPro" id="IPR015590">
    <property type="entry name" value="Aldehyde_DH_dom"/>
</dbReference>
<dbReference type="InterPro" id="IPR020593">
    <property type="entry name" value="G-glutamylP_reductase_CS"/>
</dbReference>
<dbReference type="InterPro" id="IPR012134">
    <property type="entry name" value="Glu-5-SA_DH"/>
</dbReference>
<dbReference type="InterPro" id="IPR000965">
    <property type="entry name" value="GPR_dom"/>
</dbReference>
<dbReference type="NCBIfam" id="NF001221">
    <property type="entry name" value="PRK00197.1"/>
    <property type="match status" value="1"/>
</dbReference>
<dbReference type="NCBIfam" id="TIGR00407">
    <property type="entry name" value="proA"/>
    <property type="match status" value="1"/>
</dbReference>
<dbReference type="PANTHER" id="PTHR11063:SF8">
    <property type="entry name" value="DELTA-1-PYRROLINE-5-CARBOXYLATE SYNTHASE"/>
    <property type="match status" value="1"/>
</dbReference>
<dbReference type="PANTHER" id="PTHR11063">
    <property type="entry name" value="GLUTAMATE SEMIALDEHYDE DEHYDROGENASE"/>
    <property type="match status" value="1"/>
</dbReference>
<dbReference type="Pfam" id="PF00171">
    <property type="entry name" value="Aldedh"/>
    <property type="match status" value="1"/>
</dbReference>
<dbReference type="PIRSF" id="PIRSF000151">
    <property type="entry name" value="GPR"/>
    <property type="match status" value="1"/>
</dbReference>
<dbReference type="SUPFAM" id="SSF53720">
    <property type="entry name" value="ALDH-like"/>
    <property type="match status" value="1"/>
</dbReference>
<dbReference type="PROSITE" id="PS01223">
    <property type="entry name" value="PROA"/>
    <property type="match status" value="1"/>
</dbReference>
<comment type="function">
    <text evidence="1">Catalyzes the NADPH-dependent reduction of L-glutamate 5-phosphate into L-glutamate 5-semialdehyde and phosphate. The product spontaneously undergoes cyclization to form 1-pyrroline-5-carboxylate.</text>
</comment>
<comment type="catalytic activity">
    <reaction evidence="1">
        <text>L-glutamate 5-semialdehyde + phosphate + NADP(+) = L-glutamyl 5-phosphate + NADPH + H(+)</text>
        <dbReference type="Rhea" id="RHEA:19541"/>
        <dbReference type="ChEBI" id="CHEBI:15378"/>
        <dbReference type="ChEBI" id="CHEBI:43474"/>
        <dbReference type="ChEBI" id="CHEBI:57783"/>
        <dbReference type="ChEBI" id="CHEBI:58066"/>
        <dbReference type="ChEBI" id="CHEBI:58274"/>
        <dbReference type="ChEBI" id="CHEBI:58349"/>
        <dbReference type="EC" id="1.2.1.41"/>
    </reaction>
</comment>
<comment type="pathway">
    <text evidence="1">Amino-acid biosynthesis; L-proline biosynthesis; L-glutamate 5-semialdehyde from L-glutamate: step 2/2.</text>
</comment>
<comment type="subcellular location">
    <subcellularLocation>
        <location evidence="1">Cytoplasm</location>
    </subcellularLocation>
</comment>
<comment type="similarity">
    <text evidence="1">Belongs to the gamma-glutamyl phosphate reductase family.</text>
</comment>
<proteinExistence type="inferred from homology"/>
<accession>A8MFQ5</accession>
<feature type="chain" id="PRO_1000060836" description="Gamma-glutamyl phosphate reductase">
    <location>
        <begin position="1"/>
        <end position="413"/>
    </location>
</feature>
<name>PROA_ALKOO</name>
<gene>
    <name evidence="1" type="primary">proA</name>
    <name type="ordered locus">Clos_0127</name>
</gene>